<feature type="chain" id="PRO_0000191014" description="6-carboxyhexanoate--CoA ligase">
    <location>
        <begin position="1"/>
        <end position="240"/>
    </location>
</feature>
<feature type="strand" evidence="4">
    <location>
        <begin position="3"/>
        <end position="12"/>
    </location>
</feature>
<feature type="strand" evidence="4">
    <location>
        <begin position="15"/>
        <end position="25"/>
    </location>
</feature>
<feature type="helix" evidence="4">
    <location>
        <begin position="26"/>
        <end position="28"/>
    </location>
</feature>
<feature type="helix" evidence="4">
    <location>
        <begin position="29"/>
        <end position="37"/>
    </location>
</feature>
<feature type="strand" evidence="3">
    <location>
        <begin position="39"/>
        <end position="42"/>
    </location>
</feature>
<feature type="strand" evidence="4">
    <location>
        <begin position="44"/>
        <end position="52"/>
    </location>
</feature>
<feature type="strand" evidence="4">
    <location>
        <begin position="57"/>
        <end position="60"/>
    </location>
</feature>
<feature type="strand" evidence="4">
    <location>
        <begin position="65"/>
        <end position="69"/>
    </location>
</feature>
<feature type="helix" evidence="4">
    <location>
        <begin position="73"/>
        <end position="85"/>
    </location>
</feature>
<feature type="turn" evidence="4">
    <location>
        <begin position="86"/>
        <end position="88"/>
    </location>
</feature>
<feature type="helix" evidence="4">
    <location>
        <begin position="91"/>
        <end position="102"/>
    </location>
</feature>
<feature type="strand" evidence="4">
    <location>
        <begin position="113"/>
        <end position="119"/>
    </location>
</feature>
<feature type="turn" evidence="4">
    <location>
        <begin position="120"/>
        <end position="122"/>
    </location>
</feature>
<feature type="turn" evidence="4">
    <location>
        <begin position="130"/>
        <end position="132"/>
    </location>
</feature>
<feature type="strand" evidence="4">
    <location>
        <begin position="138"/>
        <end position="141"/>
    </location>
</feature>
<feature type="helix" evidence="4">
    <location>
        <begin position="144"/>
        <end position="153"/>
    </location>
</feature>
<feature type="helix" evidence="4">
    <location>
        <begin position="158"/>
        <end position="173"/>
    </location>
</feature>
<feature type="strand" evidence="4">
    <location>
        <begin position="177"/>
        <end position="181"/>
    </location>
</feature>
<feature type="strand" evidence="2">
    <location>
        <begin position="184"/>
        <end position="186"/>
    </location>
</feature>
<feature type="strand" evidence="4">
    <location>
        <begin position="190"/>
        <end position="194"/>
    </location>
</feature>
<feature type="turn" evidence="4">
    <location>
        <begin position="195"/>
        <end position="197"/>
    </location>
</feature>
<feature type="strand" evidence="4">
    <location>
        <begin position="198"/>
        <end position="203"/>
    </location>
</feature>
<feature type="strand" evidence="4">
    <location>
        <begin position="214"/>
        <end position="219"/>
    </location>
</feature>
<feature type="helix" evidence="4">
    <location>
        <begin position="221"/>
        <end position="223"/>
    </location>
</feature>
<feature type="helix" evidence="4">
    <location>
        <begin position="224"/>
        <end position="233"/>
    </location>
</feature>
<feature type="strand" evidence="4">
    <location>
        <begin position="236"/>
        <end position="239"/>
    </location>
</feature>
<organism>
    <name type="scientific">Aquifex aeolicus (strain VF5)</name>
    <dbReference type="NCBI Taxonomy" id="224324"/>
    <lineage>
        <taxon>Bacteria</taxon>
        <taxon>Pseudomonadati</taxon>
        <taxon>Aquificota</taxon>
        <taxon>Aquificia</taxon>
        <taxon>Aquificales</taxon>
        <taxon>Aquificaceae</taxon>
        <taxon>Aquifex</taxon>
    </lineage>
</organism>
<protein>
    <recommendedName>
        <fullName evidence="1">6-carboxyhexanoate--CoA ligase</fullName>
        <ecNumber evidence="1">6.2.1.14</ecNumber>
    </recommendedName>
    <alternativeName>
        <fullName evidence="1">Pimeloyl-CoA synthase</fullName>
    </alternativeName>
</protein>
<accession>O67575</accession>
<sequence>MDLFSVRMRAQKNGKHVSGAERIVKKEELETAVKELLNRPKEFDFMNVKVEKVKDFEVVKFNLKISTYSFKSPEEAREFAVKKLTQEGIKEEVAKKAVEILSKGANPKGGNMRGAVLMDIETGERLEEDKERGVRTIHFDWKDRKKVTEKLLKEGYTLRTVDALALTFKNLFCGVVAELCWSDDPDYVTGYVSGKEIGYVRITPLKEKGDPLGGRVYFVSRKELSEIIECLTQKVVLIEL</sequence>
<gene>
    <name evidence="1" type="primary">bioW</name>
    <name type="ordered locus">aq_1659</name>
</gene>
<dbReference type="EC" id="6.2.1.14" evidence="1"/>
<dbReference type="EMBL" id="AE000657">
    <property type="protein sequence ID" value="AAC07525.1"/>
    <property type="molecule type" value="Genomic_DNA"/>
</dbReference>
<dbReference type="PIR" id="F70443">
    <property type="entry name" value="F70443"/>
</dbReference>
<dbReference type="RefSeq" id="NP_214141.1">
    <property type="nucleotide sequence ID" value="NC_000918.1"/>
</dbReference>
<dbReference type="RefSeq" id="WP_010881078.1">
    <property type="nucleotide sequence ID" value="NC_000918.1"/>
</dbReference>
<dbReference type="PDB" id="5TV5">
    <property type="method" value="X-ray"/>
    <property type="resolution" value="2.50 A"/>
    <property type="chains" value="A/B=1-240"/>
</dbReference>
<dbReference type="PDB" id="5TV6">
    <property type="method" value="X-ray"/>
    <property type="resolution" value="2.46 A"/>
    <property type="chains" value="A/B=1-240"/>
</dbReference>
<dbReference type="PDB" id="5TV8">
    <property type="method" value="X-ray"/>
    <property type="resolution" value="2.55 A"/>
    <property type="chains" value="A/B=1-240"/>
</dbReference>
<dbReference type="PDB" id="5TVA">
    <property type="method" value="X-ray"/>
    <property type="resolution" value="2.25 A"/>
    <property type="chains" value="A/B=1-240"/>
</dbReference>
<dbReference type="PDBsum" id="5TV5"/>
<dbReference type="PDBsum" id="5TV6"/>
<dbReference type="PDBsum" id="5TV8"/>
<dbReference type="PDBsum" id="5TVA"/>
<dbReference type="SMR" id="O67575"/>
<dbReference type="STRING" id="224324.aq_1659"/>
<dbReference type="DNASU" id="1193291"/>
<dbReference type="EnsemblBacteria" id="AAC07525">
    <property type="protein sequence ID" value="AAC07525"/>
    <property type="gene ID" value="aq_1659"/>
</dbReference>
<dbReference type="KEGG" id="aae:aq_1659"/>
<dbReference type="PATRIC" id="fig|224324.8.peg.1281"/>
<dbReference type="eggNOG" id="COG1424">
    <property type="taxonomic scope" value="Bacteria"/>
</dbReference>
<dbReference type="HOGENOM" id="CLU_076858_0_0_0"/>
<dbReference type="InParanoid" id="O67575"/>
<dbReference type="OrthoDB" id="9792985at2"/>
<dbReference type="BRENDA" id="6.2.1.14">
    <property type="organism ID" value="396"/>
</dbReference>
<dbReference type="UniPathway" id="UPA00999">
    <property type="reaction ID" value="UER00351"/>
</dbReference>
<dbReference type="Proteomes" id="UP000000798">
    <property type="component" value="Chromosome"/>
</dbReference>
<dbReference type="GO" id="GO:0042410">
    <property type="term" value="F:6-carboxyhexanoate-CoA ligase activity"/>
    <property type="evidence" value="ECO:0007669"/>
    <property type="project" value="UniProtKB-UniRule"/>
</dbReference>
<dbReference type="GO" id="GO:0005524">
    <property type="term" value="F:ATP binding"/>
    <property type="evidence" value="ECO:0007669"/>
    <property type="project" value="UniProtKB-KW"/>
</dbReference>
<dbReference type="GO" id="GO:0000287">
    <property type="term" value="F:magnesium ion binding"/>
    <property type="evidence" value="ECO:0007669"/>
    <property type="project" value="UniProtKB-UniRule"/>
</dbReference>
<dbReference type="GO" id="GO:0009102">
    <property type="term" value="P:biotin biosynthetic process"/>
    <property type="evidence" value="ECO:0007669"/>
    <property type="project" value="UniProtKB-UniRule"/>
</dbReference>
<dbReference type="HAMAP" id="MF_00668">
    <property type="entry name" value="BioW"/>
    <property type="match status" value="1"/>
</dbReference>
<dbReference type="InterPro" id="IPR005499">
    <property type="entry name" value="BioW"/>
</dbReference>
<dbReference type="NCBIfam" id="TIGR01204">
    <property type="entry name" value="bioW"/>
    <property type="match status" value="1"/>
</dbReference>
<dbReference type="NCBIfam" id="NF002360">
    <property type="entry name" value="PRK01322.1"/>
    <property type="match status" value="1"/>
</dbReference>
<dbReference type="Pfam" id="PF03744">
    <property type="entry name" value="BioW"/>
    <property type="match status" value="1"/>
</dbReference>
<evidence type="ECO:0000255" key="1">
    <source>
        <dbReference type="HAMAP-Rule" id="MF_00668"/>
    </source>
</evidence>
<evidence type="ECO:0007829" key="2">
    <source>
        <dbReference type="PDB" id="5TV5"/>
    </source>
</evidence>
<evidence type="ECO:0007829" key="3">
    <source>
        <dbReference type="PDB" id="5TV6"/>
    </source>
</evidence>
<evidence type="ECO:0007829" key="4">
    <source>
        <dbReference type="PDB" id="5TVA"/>
    </source>
</evidence>
<reference key="1">
    <citation type="journal article" date="1998" name="Nature">
        <title>The complete genome of the hyperthermophilic bacterium Aquifex aeolicus.</title>
        <authorList>
            <person name="Deckert G."/>
            <person name="Warren P.V."/>
            <person name="Gaasterland T."/>
            <person name="Young W.G."/>
            <person name="Lenox A.L."/>
            <person name="Graham D.E."/>
            <person name="Overbeek R."/>
            <person name="Snead M.A."/>
            <person name="Keller M."/>
            <person name="Aujay M."/>
            <person name="Huber R."/>
            <person name="Feldman R.A."/>
            <person name="Short J.M."/>
            <person name="Olsen G.J."/>
            <person name="Swanson R.V."/>
        </authorList>
    </citation>
    <scope>NUCLEOTIDE SEQUENCE [LARGE SCALE GENOMIC DNA]</scope>
    <source>
        <strain>VF5</strain>
    </source>
</reference>
<proteinExistence type="evidence at protein level"/>
<comment type="function">
    <text evidence="1">Catalyzes the transformation of pimelate into pimeloyl-CoA with concomitant hydrolysis of ATP to AMP.</text>
</comment>
<comment type="catalytic activity">
    <reaction evidence="1">
        <text>heptanedioate + ATP + CoA = 6-carboxyhexanoyl-CoA + AMP + diphosphate</text>
        <dbReference type="Rhea" id="RHEA:14781"/>
        <dbReference type="ChEBI" id="CHEBI:30616"/>
        <dbReference type="ChEBI" id="CHEBI:33019"/>
        <dbReference type="ChEBI" id="CHEBI:36165"/>
        <dbReference type="ChEBI" id="CHEBI:57287"/>
        <dbReference type="ChEBI" id="CHEBI:57360"/>
        <dbReference type="ChEBI" id="CHEBI:456215"/>
        <dbReference type="EC" id="6.2.1.14"/>
    </reaction>
</comment>
<comment type="cofactor">
    <cofactor evidence="1">
        <name>Mg(2+)</name>
        <dbReference type="ChEBI" id="CHEBI:18420"/>
    </cofactor>
</comment>
<comment type="pathway">
    <text evidence="1">Metabolic intermediate metabolism; pimeloyl-CoA biosynthesis; pimeloyl-CoA from pimelate: step 1/1.</text>
</comment>
<comment type="subunit">
    <text evidence="1">Homodimer.</text>
</comment>
<comment type="similarity">
    <text evidence="1">Belongs to the BioW family.</text>
</comment>
<name>BIOW_AQUAE</name>
<keyword id="KW-0002">3D-structure</keyword>
<keyword id="KW-0067">ATP-binding</keyword>
<keyword id="KW-0093">Biotin biosynthesis</keyword>
<keyword id="KW-0436">Ligase</keyword>
<keyword id="KW-0460">Magnesium</keyword>
<keyword id="KW-0547">Nucleotide-binding</keyword>
<keyword id="KW-1185">Reference proteome</keyword>